<protein>
    <recommendedName>
        <fullName evidence="1">Cysteine desulfuration protein SufE</fullName>
    </recommendedName>
</protein>
<comment type="function">
    <text evidence="1">Participates in cysteine desulfuration mediated by SufS. Cysteine desulfuration mobilizes sulfur from L-cysteine to yield L-alanine and constitutes an essential step in sulfur metabolism for biosynthesis of a variety of sulfur-containing biomolecules. Functions as a sulfur acceptor for SufS, by mediating the direct transfer of the sulfur atom from the S-sulfanylcysteine of SufS, an intermediate product of cysteine desulfuration process.</text>
</comment>
<comment type="pathway">
    <text evidence="1">Cofactor biosynthesis; iron-sulfur cluster biosynthesis.</text>
</comment>
<comment type="subunit">
    <text evidence="1">Homodimer. Interacts with SufS.</text>
</comment>
<comment type="subcellular location">
    <subcellularLocation>
        <location evidence="1">Cytoplasm</location>
    </subcellularLocation>
</comment>
<comment type="similarity">
    <text evidence="1">Belongs to the SufE family.</text>
</comment>
<name>SUFE_SALPB</name>
<feature type="chain" id="PRO_1000088437" description="Cysteine desulfuration protein SufE">
    <location>
        <begin position="1"/>
        <end position="138"/>
    </location>
</feature>
<feature type="active site" description="Cysteine persulfide intermediate" evidence="1">
    <location>
        <position position="51"/>
    </location>
</feature>
<reference key="1">
    <citation type="submission" date="2007-11" db="EMBL/GenBank/DDBJ databases">
        <authorList>
            <consortium name="The Salmonella enterica serovar Paratyphi B Genome Sequencing Project"/>
            <person name="McClelland M."/>
            <person name="Sanderson E.K."/>
            <person name="Porwollik S."/>
            <person name="Spieth J."/>
            <person name="Clifton W.S."/>
            <person name="Fulton R."/>
            <person name="Cordes M."/>
            <person name="Wollam A."/>
            <person name="Shah N."/>
            <person name="Pepin K."/>
            <person name="Bhonagiri V."/>
            <person name="Nash W."/>
            <person name="Johnson M."/>
            <person name="Thiruvilangam P."/>
            <person name="Wilson R."/>
        </authorList>
    </citation>
    <scope>NUCLEOTIDE SEQUENCE [LARGE SCALE GENOMIC DNA]</scope>
    <source>
        <strain>ATCC BAA-1250 / SPB7</strain>
    </source>
</reference>
<evidence type="ECO:0000255" key="1">
    <source>
        <dbReference type="HAMAP-Rule" id="MF_01832"/>
    </source>
</evidence>
<dbReference type="EMBL" id="CP000886">
    <property type="protein sequence ID" value="ABX67344.1"/>
    <property type="molecule type" value="Genomic_DNA"/>
</dbReference>
<dbReference type="RefSeq" id="WP_000729470.1">
    <property type="nucleotide sequence ID" value="NC_010102.1"/>
</dbReference>
<dbReference type="SMR" id="A9N141"/>
<dbReference type="KEGG" id="spq:SPAB_01955"/>
<dbReference type="PATRIC" id="fig|1016998.12.peg.1846"/>
<dbReference type="HOGENOM" id="CLU_124502_1_1_6"/>
<dbReference type="BioCyc" id="SENT1016998:SPAB_RS07980-MONOMER"/>
<dbReference type="UniPathway" id="UPA00266"/>
<dbReference type="Proteomes" id="UP000008556">
    <property type="component" value="Chromosome"/>
</dbReference>
<dbReference type="GO" id="GO:0005737">
    <property type="term" value="C:cytoplasm"/>
    <property type="evidence" value="ECO:0007669"/>
    <property type="project" value="UniProtKB-SubCell"/>
</dbReference>
<dbReference type="GO" id="GO:0016226">
    <property type="term" value="P:iron-sulfur cluster assembly"/>
    <property type="evidence" value="ECO:0007669"/>
    <property type="project" value="InterPro"/>
</dbReference>
<dbReference type="GO" id="GO:0006790">
    <property type="term" value="P:sulfur compound metabolic process"/>
    <property type="evidence" value="ECO:0007669"/>
    <property type="project" value="InterPro"/>
</dbReference>
<dbReference type="Gene3D" id="3.90.1010.10">
    <property type="match status" value="1"/>
</dbReference>
<dbReference type="HAMAP" id="MF_01832">
    <property type="entry name" value="SufE"/>
    <property type="match status" value="1"/>
</dbReference>
<dbReference type="InterPro" id="IPR023939">
    <property type="entry name" value="Cysteine_desulfuration_SufE"/>
</dbReference>
<dbReference type="InterPro" id="IPR003808">
    <property type="entry name" value="Fe-S_metab-assoc_dom"/>
</dbReference>
<dbReference type="NCBIfam" id="NF006792">
    <property type="entry name" value="PRK09296.1"/>
    <property type="match status" value="1"/>
</dbReference>
<dbReference type="PANTHER" id="PTHR43597:SF3">
    <property type="entry name" value="CYSTEINE DESULFURATION PROTEIN SUFE"/>
    <property type="match status" value="1"/>
</dbReference>
<dbReference type="PANTHER" id="PTHR43597">
    <property type="entry name" value="SULFUR ACCEPTOR PROTEIN CSDE"/>
    <property type="match status" value="1"/>
</dbReference>
<dbReference type="Pfam" id="PF02657">
    <property type="entry name" value="SufE"/>
    <property type="match status" value="1"/>
</dbReference>
<dbReference type="SUPFAM" id="SSF82649">
    <property type="entry name" value="SufE/NifU"/>
    <property type="match status" value="1"/>
</dbReference>
<keyword id="KW-0963">Cytoplasm</keyword>
<gene>
    <name evidence="1" type="primary">sufE</name>
    <name type="ordered locus">SPAB_01955</name>
</gene>
<organism>
    <name type="scientific">Salmonella paratyphi B (strain ATCC BAA-1250 / SPB7)</name>
    <dbReference type="NCBI Taxonomy" id="1016998"/>
    <lineage>
        <taxon>Bacteria</taxon>
        <taxon>Pseudomonadati</taxon>
        <taxon>Pseudomonadota</taxon>
        <taxon>Gammaproteobacteria</taxon>
        <taxon>Enterobacterales</taxon>
        <taxon>Enterobacteriaceae</taxon>
        <taxon>Salmonella</taxon>
    </lineage>
</organism>
<proteinExistence type="inferred from homology"/>
<accession>A9N141</accession>
<sequence>MAALPDKEKLLRNFTRCANWEEKYLYIIELGQRLAELNPQDRNPQNTIHGCQSQVWIVMRRNANGIIELQGDSDAAIVKGLMAVVFILYHQMTAQDIVHFDVRPWFEKMALTQHLTPSRSQGLEAMIRAIRAKAATLS</sequence>